<evidence type="ECO:0000255" key="1">
    <source>
        <dbReference type="HAMAP-Rule" id="MF_01025"/>
    </source>
</evidence>
<organism>
    <name type="scientific">Prochlorococcus marinus (strain MIT 9215)</name>
    <dbReference type="NCBI Taxonomy" id="93060"/>
    <lineage>
        <taxon>Bacteria</taxon>
        <taxon>Bacillati</taxon>
        <taxon>Cyanobacteriota</taxon>
        <taxon>Cyanophyceae</taxon>
        <taxon>Synechococcales</taxon>
        <taxon>Prochlorococcaceae</taxon>
        <taxon>Prochlorococcus</taxon>
    </lineage>
</organism>
<accession>A8G5D5</accession>
<feature type="chain" id="PRO_1000149242" description="2-isopropylmalate synthase">
    <location>
        <begin position="1"/>
        <end position="546"/>
    </location>
</feature>
<feature type="domain" description="Pyruvate carboxyltransferase" evidence="1">
    <location>
        <begin position="8"/>
        <end position="271"/>
    </location>
</feature>
<feature type="region of interest" description="Regulatory domain" evidence="1">
    <location>
        <begin position="408"/>
        <end position="546"/>
    </location>
</feature>
<feature type="binding site" evidence="1">
    <location>
        <position position="17"/>
    </location>
    <ligand>
        <name>Mn(2+)</name>
        <dbReference type="ChEBI" id="CHEBI:29035"/>
    </ligand>
</feature>
<feature type="binding site" evidence="1">
    <location>
        <position position="208"/>
    </location>
    <ligand>
        <name>Mn(2+)</name>
        <dbReference type="ChEBI" id="CHEBI:29035"/>
    </ligand>
</feature>
<feature type="binding site" evidence="1">
    <location>
        <position position="210"/>
    </location>
    <ligand>
        <name>Mn(2+)</name>
        <dbReference type="ChEBI" id="CHEBI:29035"/>
    </ligand>
</feature>
<feature type="binding site" evidence="1">
    <location>
        <position position="244"/>
    </location>
    <ligand>
        <name>Mn(2+)</name>
        <dbReference type="ChEBI" id="CHEBI:29035"/>
    </ligand>
</feature>
<protein>
    <recommendedName>
        <fullName evidence="1">2-isopropylmalate synthase</fullName>
        <ecNumber evidence="1">2.3.3.13</ecNumber>
    </recommendedName>
    <alternativeName>
        <fullName evidence="1">Alpha-IPM synthase</fullName>
    </alternativeName>
    <alternativeName>
        <fullName evidence="1">Alpha-isopropylmalate synthase</fullName>
    </alternativeName>
</protein>
<proteinExistence type="inferred from homology"/>
<keyword id="KW-0028">Amino-acid biosynthesis</keyword>
<keyword id="KW-0100">Branched-chain amino acid biosynthesis</keyword>
<keyword id="KW-0963">Cytoplasm</keyword>
<keyword id="KW-0432">Leucine biosynthesis</keyword>
<keyword id="KW-0464">Manganese</keyword>
<keyword id="KW-0479">Metal-binding</keyword>
<keyword id="KW-0808">Transferase</keyword>
<comment type="function">
    <text evidence="1">Catalyzes the condensation of the acetyl group of acetyl-CoA with 3-methyl-2-oxobutanoate (2-ketoisovalerate) to form 3-carboxy-3-hydroxy-4-methylpentanoate (2-isopropylmalate).</text>
</comment>
<comment type="catalytic activity">
    <reaction evidence="1">
        <text>3-methyl-2-oxobutanoate + acetyl-CoA + H2O = (2S)-2-isopropylmalate + CoA + H(+)</text>
        <dbReference type="Rhea" id="RHEA:21524"/>
        <dbReference type="ChEBI" id="CHEBI:1178"/>
        <dbReference type="ChEBI" id="CHEBI:11851"/>
        <dbReference type="ChEBI" id="CHEBI:15377"/>
        <dbReference type="ChEBI" id="CHEBI:15378"/>
        <dbReference type="ChEBI" id="CHEBI:57287"/>
        <dbReference type="ChEBI" id="CHEBI:57288"/>
        <dbReference type="EC" id="2.3.3.13"/>
    </reaction>
</comment>
<comment type="cofactor">
    <cofactor evidence="1">
        <name>Mn(2+)</name>
        <dbReference type="ChEBI" id="CHEBI:29035"/>
    </cofactor>
</comment>
<comment type="pathway">
    <text evidence="1">Amino-acid biosynthesis; L-leucine biosynthesis; L-leucine from 3-methyl-2-oxobutanoate: step 1/4.</text>
</comment>
<comment type="subunit">
    <text evidence="1">Homodimer.</text>
</comment>
<comment type="subcellular location">
    <subcellularLocation>
        <location evidence="1">Cytoplasm</location>
    </subcellularLocation>
</comment>
<comment type="similarity">
    <text evidence="1">Belongs to the alpha-IPM synthase/homocitrate synthase family. LeuA type 1 subfamily.</text>
</comment>
<name>LEU1_PROM2</name>
<reference key="1">
    <citation type="journal article" date="2007" name="PLoS Genet.">
        <title>Patterns and implications of gene gain and loss in the evolution of Prochlorococcus.</title>
        <authorList>
            <person name="Kettler G.C."/>
            <person name="Martiny A.C."/>
            <person name="Huang K."/>
            <person name="Zucker J."/>
            <person name="Coleman M.L."/>
            <person name="Rodrigue S."/>
            <person name="Chen F."/>
            <person name="Lapidus A."/>
            <person name="Ferriera S."/>
            <person name="Johnson J."/>
            <person name="Steglich C."/>
            <person name="Church G.M."/>
            <person name="Richardson P."/>
            <person name="Chisholm S.W."/>
        </authorList>
    </citation>
    <scope>NUCLEOTIDE SEQUENCE [LARGE SCALE GENOMIC DNA]</scope>
    <source>
        <strain>MIT 9215</strain>
    </source>
</reference>
<gene>
    <name evidence="1" type="primary">leuA</name>
    <name type="ordered locus">P9215_12011</name>
</gene>
<sequence>MSKDPGRILIFDTTLRDGEQSPGASLNLEEKLAIAHQLARLGVDVIEAGFPFASPGDFKAVNKIANSVGKENGPIICGLARASKGDIKACYEAVSPAPKKRIHTFIATSDIHLKHKLKKSRKDVLQIVPEMVNYAKSLVDDIEFSCEDASRSDPDFLYEVIQLAISAGATTINIPDTVGFTTPNEFGKLISDINKNVPNIDEAVISVHGHNDLGLAVANFLEAVKNGARQLECTINGIGERAGNASLEELVMALHVRKSFFNKFFNRNSDSPTPLTAIRTEEITKTSRLVSNLTGMIVQPNKAIVGANAFAHESGIHQDGVLKNRLTYEIIDAKTVGLSDNKISLGKLSGRSAVRARLEEMGYDLSREDLNDAFARFKDLADRKREITDRDLEAIVSEQVQLPEAKFQLSLVQVSCGNASKPTATISLINTEDNSEDTAVSIGTGPVDAVCEALNKLAKVPNELIEFSVKSVTEGIDALGEVTIRIRRDNKIYSGHSADTDVVVAAANAYVNALNRLVFSEKKSSIHPQFDNLENADKTLLSNPGK</sequence>
<dbReference type="EC" id="2.3.3.13" evidence="1"/>
<dbReference type="EMBL" id="CP000825">
    <property type="protein sequence ID" value="ABV50816.1"/>
    <property type="molecule type" value="Genomic_DNA"/>
</dbReference>
<dbReference type="RefSeq" id="WP_012007891.1">
    <property type="nucleotide sequence ID" value="NC_009840.1"/>
</dbReference>
<dbReference type="SMR" id="A8G5D5"/>
<dbReference type="STRING" id="93060.P9215_12011"/>
<dbReference type="KEGG" id="pmh:P9215_12011"/>
<dbReference type="eggNOG" id="COG0119">
    <property type="taxonomic scope" value="Bacteria"/>
</dbReference>
<dbReference type="HOGENOM" id="CLU_022158_0_1_3"/>
<dbReference type="OrthoDB" id="9804858at2"/>
<dbReference type="UniPathway" id="UPA00048">
    <property type="reaction ID" value="UER00070"/>
</dbReference>
<dbReference type="Proteomes" id="UP000002014">
    <property type="component" value="Chromosome"/>
</dbReference>
<dbReference type="GO" id="GO:0005737">
    <property type="term" value="C:cytoplasm"/>
    <property type="evidence" value="ECO:0007669"/>
    <property type="project" value="UniProtKB-SubCell"/>
</dbReference>
<dbReference type="GO" id="GO:0003852">
    <property type="term" value="F:2-isopropylmalate synthase activity"/>
    <property type="evidence" value="ECO:0007669"/>
    <property type="project" value="UniProtKB-UniRule"/>
</dbReference>
<dbReference type="GO" id="GO:0003985">
    <property type="term" value="F:acetyl-CoA C-acetyltransferase activity"/>
    <property type="evidence" value="ECO:0007669"/>
    <property type="project" value="UniProtKB-UniRule"/>
</dbReference>
<dbReference type="GO" id="GO:0030145">
    <property type="term" value="F:manganese ion binding"/>
    <property type="evidence" value="ECO:0007669"/>
    <property type="project" value="UniProtKB-UniRule"/>
</dbReference>
<dbReference type="GO" id="GO:0009098">
    <property type="term" value="P:L-leucine biosynthetic process"/>
    <property type="evidence" value="ECO:0007669"/>
    <property type="project" value="UniProtKB-UniRule"/>
</dbReference>
<dbReference type="CDD" id="cd07940">
    <property type="entry name" value="DRE_TIM_IPMS"/>
    <property type="match status" value="1"/>
</dbReference>
<dbReference type="FunFam" id="1.10.238.260:FF:000001">
    <property type="entry name" value="2-isopropylmalate synthase"/>
    <property type="match status" value="1"/>
</dbReference>
<dbReference type="FunFam" id="3.20.20.70:FF:000010">
    <property type="entry name" value="2-isopropylmalate synthase"/>
    <property type="match status" value="1"/>
</dbReference>
<dbReference type="Gene3D" id="1.10.238.260">
    <property type="match status" value="1"/>
</dbReference>
<dbReference type="Gene3D" id="3.30.160.270">
    <property type="match status" value="1"/>
</dbReference>
<dbReference type="Gene3D" id="3.20.20.70">
    <property type="entry name" value="Aldolase class I"/>
    <property type="match status" value="1"/>
</dbReference>
<dbReference type="HAMAP" id="MF_01025">
    <property type="entry name" value="LeuA_type1"/>
    <property type="match status" value="1"/>
</dbReference>
<dbReference type="InterPro" id="IPR050073">
    <property type="entry name" value="2-IPM_HCS-like"/>
</dbReference>
<dbReference type="InterPro" id="IPR013709">
    <property type="entry name" value="2-isopropylmalate_synth_dimer"/>
</dbReference>
<dbReference type="InterPro" id="IPR002034">
    <property type="entry name" value="AIPM/Hcit_synth_CS"/>
</dbReference>
<dbReference type="InterPro" id="IPR013785">
    <property type="entry name" value="Aldolase_TIM"/>
</dbReference>
<dbReference type="InterPro" id="IPR054691">
    <property type="entry name" value="LeuA/HCS_post-cat"/>
</dbReference>
<dbReference type="InterPro" id="IPR036230">
    <property type="entry name" value="LeuA_allosteric_dom_sf"/>
</dbReference>
<dbReference type="InterPro" id="IPR005671">
    <property type="entry name" value="LeuA_bact_synth"/>
</dbReference>
<dbReference type="InterPro" id="IPR000891">
    <property type="entry name" value="PYR_CT"/>
</dbReference>
<dbReference type="NCBIfam" id="TIGR00973">
    <property type="entry name" value="leuA_bact"/>
    <property type="match status" value="1"/>
</dbReference>
<dbReference type="NCBIfam" id="NF002086">
    <property type="entry name" value="PRK00915.1-3"/>
    <property type="match status" value="1"/>
</dbReference>
<dbReference type="PANTHER" id="PTHR10277:SF9">
    <property type="entry name" value="2-ISOPROPYLMALATE SYNTHASE 1, CHLOROPLASTIC-RELATED"/>
    <property type="match status" value="1"/>
</dbReference>
<dbReference type="PANTHER" id="PTHR10277">
    <property type="entry name" value="HOMOCITRATE SYNTHASE-RELATED"/>
    <property type="match status" value="1"/>
</dbReference>
<dbReference type="Pfam" id="PF22617">
    <property type="entry name" value="HCS_D2"/>
    <property type="match status" value="1"/>
</dbReference>
<dbReference type="Pfam" id="PF00682">
    <property type="entry name" value="HMGL-like"/>
    <property type="match status" value="1"/>
</dbReference>
<dbReference type="Pfam" id="PF08502">
    <property type="entry name" value="LeuA_dimer"/>
    <property type="match status" value="1"/>
</dbReference>
<dbReference type="SMART" id="SM00917">
    <property type="entry name" value="LeuA_dimer"/>
    <property type="match status" value="1"/>
</dbReference>
<dbReference type="SUPFAM" id="SSF110921">
    <property type="entry name" value="2-isopropylmalate synthase LeuA, allosteric (dimerisation) domain"/>
    <property type="match status" value="1"/>
</dbReference>
<dbReference type="SUPFAM" id="SSF51569">
    <property type="entry name" value="Aldolase"/>
    <property type="match status" value="1"/>
</dbReference>
<dbReference type="PROSITE" id="PS00815">
    <property type="entry name" value="AIPM_HOMOCIT_SYNTH_1"/>
    <property type="match status" value="1"/>
</dbReference>
<dbReference type="PROSITE" id="PS00816">
    <property type="entry name" value="AIPM_HOMOCIT_SYNTH_2"/>
    <property type="match status" value="1"/>
</dbReference>
<dbReference type="PROSITE" id="PS50991">
    <property type="entry name" value="PYR_CT"/>
    <property type="match status" value="1"/>
</dbReference>